<evidence type="ECO:0000255" key="1"/>
<evidence type="ECO:0000256" key="2">
    <source>
        <dbReference type="SAM" id="MobiDB-lite"/>
    </source>
</evidence>
<evidence type="ECO:0000269" key="3">
    <source>
    </source>
</evidence>
<evidence type="ECO:0000269" key="4">
    <source>
    </source>
</evidence>
<evidence type="ECO:0000305" key="5"/>
<evidence type="ECO:0007744" key="6">
    <source>
        <dbReference type="PDB" id="3JD5"/>
    </source>
</evidence>
<evidence type="ECO:0007829" key="7">
    <source>
        <dbReference type="PDB" id="6NEQ"/>
    </source>
</evidence>
<dbReference type="EMBL" id="BC102297">
    <property type="protein sequence ID" value="AAI02298.1"/>
    <property type="molecule type" value="mRNA"/>
</dbReference>
<dbReference type="RefSeq" id="NP_001030250.1">
    <property type="nucleotide sequence ID" value="NM_001035078.1"/>
</dbReference>
<dbReference type="PDB" id="3JD5">
    <property type="method" value="EM"/>
    <property type="resolution" value="7.00 A"/>
    <property type="chains" value="K=1-197"/>
</dbReference>
<dbReference type="PDB" id="6NEQ">
    <property type="method" value="EM"/>
    <property type="resolution" value="3.32 A"/>
    <property type="chains" value="K=1-197"/>
</dbReference>
<dbReference type="PDB" id="6NF8">
    <property type="method" value="EM"/>
    <property type="resolution" value="3.48 A"/>
    <property type="chains" value="K=1-197"/>
</dbReference>
<dbReference type="PDBsum" id="3JD5"/>
<dbReference type="PDBsum" id="6NEQ"/>
<dbReference type="PDBsum" id="6NF8"/>
<dbReference type="EMDB" id="EMD-9358"/>
<dbReference type="EMDB" id="EMD-9362"/>
<dbReference type="SMR" id="P82911"/>
<dbReference type="CORUM" id="P82911"/>
<dbReference type="FunCoup" id="P82911">
    <property type="interactions" value="1070"/>
</dbReference>
<dbReference type="IntAct" id="P82911">
    <property type="interactions" value="2"/>
</dbReference>
<dbReference type="STRING" id="9913.ENSBTAP00000026421"/>
<dbReference type="iPTMnet" id="P82911"/>
<dbReference type="PaxDb" id="9913-ENSBTAP00000026421"/>
<dbReference type="GeneID" id="509816"/>
<dbReference type="KEGG" id="bta:509816"/>
<dbReference type="CTD" id="64963"/>
<dbReference type="eggNOG" id="KOG0408">
    <property type="taxonomic scope" value="Eukaryota"/>
</dbReference>
<dbReference type="InParanoid" id="P82911"/>
<dbReference type="OrthoDB" id="1654884at2759"/>
<dbReference type="Proteomes" id="UP000009136">
    <property type="component" value="Unplaced"/>
</dbReference>
<dbReference type="GO" id="GO:0005743">
    <property type="term" value="C:mitochondrial inner membrane"/>
    <property type="evidence" value="ECO:0000304"/>
    <property type="project" value="Reactome"/>
</dbReference>
<dbReference type="GO" id="GO:0005763">
    <property type="term" value="C:mitochondrial small ribosomal subunit"/>
    <property type="evidence" value="ECO:0000314"/>
    <property type="project" value="UniProtKB"/>
</dbReference>
<dbReference type="GO" id="GO:0003735">
    <property type="term" value="F:structural constituent of ribosome"/>
    <property type="evidence" value="ECO:0007005"/>
    <property type="project" value="UniProtKB"/>
</dbReference>
<dbReference type="GO" id="GO:0032543">
    <property type="term" value="P:mitochondrial translation"/>
    <property type="evidence" value="ECO:0007005"/>
    <property type="project" value="UniProtKB"/>
</dbReference>
<dbReference type="GO" id="GO:0043043">
    <property type="term" value="P:peptide biosynthetic process"/>
    <property type="evidence" value="ECO:0000305"/>
    <property type="project" value="UniProtKB"/>
</dbReference>
<dbReference type="GO" id="GO:0006412">
    <property type="term" value="P:translation"/>
    <property type="evidence" value="ECO:0000318"/>
    <property type="project" value="GO_Central"/>
</dbReference>
<dbReference type="FunFam" id="3.30.420.80:FF:000006">
    <property type="entry name" value="28S ribosomal protein S11, mitochondrial"/>
    <property type="match status" value="1"/>
</dbReference>
<dbReference type="Gene3D" id="3.30.420.80">
    <property type="entry name" value="Ribosomal protein S11"/>
    <property type="match status" value="1"/>
</dbReference>
<dbReference type="HAMAP" id="MF_01310">
    <property type="entry name" value="Ribosomal_uS11"/>
    <property type="match status" value="1"/>
</dbReference>
<dbReference type="InterPro" id="IPR001971">
    <property type="entry name" value="Ribosomal_uS11"/>
</dbReference>
<dbReference type="InterPro" id="IPR018102">
    <property type="entry name" value="Ribosomal_uS11_CS"/>
</dbReference>
<dbReference type="InterPro" id="IPR036967">
    <property type="entry name" value="Ribosomal_uS11_sf"/>
</dbReference>
<dbReference type="NCBIfam" id="NF003698">
    <property type="entry name" value="PRK05309.1"/>
    <property type="match status" value="1"/>
</dbReference>
<dbReference type="PANTHER" id="PTHR11759">
    <property type="entry name" value="40S RIBOSOMAL PROTEIN S14/30S RIBOSOMAL PROTEIN S11"/>
    <property type="match status" value="1"/>
</dbReference>
<dbReference type="Pfam" id="PF00411">
    <property type="entry name" value="Ribosomal_S11"/>
    <property type="match status" value="1"/>
</dbReference>
<dbReference type="SUPFAM" id="SSF53137">
    <property type="entry name" value="Translational machinery components"/>
    <property type="match status" value="1"/>
</dbReference>
<dbReference type="PROSITE" id="PS00054">
    <property type="entry name" value="RIBOSOMAL_S11"/>
    <property type="match status" value="1"/>
</dbReference>
<name>RT11_BOVIN</name>
<feature type="transit peptide" description="Mitochondrion" evidence="1">
    <location>
        <begin position="1"/>
        <end status="unknown"/>
    </location>
</feature>
<feature type="chain" id="PRO_0000123335" description="Small ribosomal subunit protein uS11m">
    <location>
        <begin status="unknown"/>
        <end position="197"/>
    </location>
</feature>
<feature type="region of interest" description="Disordered" evidence="2">
    <location>
        <begin position="43"/>
        <end position="66"/>
    </location>
</feature>
<feature type="compositionally biased region" description="Basic and acidic residues" evidence="2">
    <location>
        <begin position="43"/>
        <end position="52"/>
    </location>
</feature>
<feature type="strand" evidence="7">
    <location>
        <begin position="70"/>
        <end position="72"/>
    </location>
</feature>
<feature type="strand" evidence="7">
    <location>
        <begin position="78"/>
        <end position="80"/>
    </location>
</feature>
<feature type="strand" evidence="7">
    <location>
        <begin position="83"/>
        <end position="86"/>
    </location>
</feature>
<feature type="strand" evidence="7">
    <location>
        <begin position="88"/>
        <end position="93"/>
    </location>
</feature>
<feature type="strand" evidence="7">
    <location>
        <begin position="98"/>
        <end position="103"/>
    </location>
</feature>
<feature type="helix" evidence="7">
    <location>
        <begin position="115"/>
        <end position="118"/>
    </location>
</feature>
<feature type="helix" evidence="7">
    <location>
        <begin position="124"/>
        <end position="126"/>
    </location>
</feature>
<feature type="helix" evidence="7">
    <location>
        <begin position="128"/>
        <end position="143"/>
    </location>
</feature>
<feature type="strand" evidence="7">
    <location>
        <begin position="149"/>
        <end position="154"/>
    </location>
</feature>
<feature type="strand" evidence="7">
    <location>
        <begin position="158"/>
        <end position="161"/>
    </location>
</feature>
<feature type="helix" evidence="7">
    <location>
        <begin position="162"/>
        <end position="170"/>
    </location>
</feature>
<feature type="strand" evidence="7">
    <location>
        <begin position="177"/>
        <end position="180"/>
    </location>
</feature>
<reference key="1">
    <citation type="submission" date="2005-08" db="EMBL/GenBank/DDBJ databases">
        <authorList>
            <consortium name="NIH - Mammalian Gene Collection (MGC) project"/>
        </authorList>
    </citation>
    <scope>NUCLEOTIDE SEQUENCE [LARGE SCALE MRNA]</scope>
    <source>
        <strain>Crossbred X Angus</strain>
        <tissue>Ileum</tissue>
    </source>
</reference>
<reference key="2">
    <citation type="journal article" date="2001" name="J. Biol. Chem.">
        <title>The small subunit of the mammalian mitochondrial ribosome: identification of the full complement of ribosomal proteins present.</title>
        <authorList>
            <person name="Koc E.C."/>
            <person name="Burkhart W."/>
            <person name="Blackburn K."/>
            <person name="Moseley A."/>
            <person name="Spremulli L.L."/>
        </authorList>
    </citation>
    <scope>PROTEIN SEQUENCE OF 81-93; 114-121 AND 126-141</scope>
    <scope>SUBCELLULAR LOCATION</scope>
    <scope>SUBUNIT</scope>
    <source>
        <tissue>Liver</tissue>
    </source>
</reference>
<reference evidence="6" key="3">
    <citation type="journal article" date="2014" name="Proc. Natl. Acad. Sci. U.S.A.">
        <title>Cryo-EM structure of the small subunit of the mammalian mitochondrial ribosome.</title>
        <authorList>
            <person name="Kaushal P.S."/>
            <person name="Sharma M.R."/>
            <person name="Booth T.M."/>
            <person name="Haque E.M."/>
            <person name="Tung C.S."/>
            <person name="Sanbonmatsu K.Y."/>
            <person name="Spremulli L.L."/>
            <person name="Agrawal R.K."/>
        </authorList>
    </citation>
    <scope>STRUCTURE BY ELECTRON MICROSCOPY (7.00 ANGSTROMS)</scope>
    <scope>SUBCELLULAR LOCATION</scope>
    <scope>SUBUNIT</scope>
</reference>
<protein>
    <recommendedName>
        <fullName evidence="5">Small ribosomal subunit protein uS11m</fullName>
    </recommendedName>
    <alternativeName>
        <fullName>28S ribosomal protein S11, mitochondrial</fullName>
        <shortName>MRP-S11</shortName>
        <shortName>S11mt</shortName>
    </alternativeName>
</protein>
<gene>
    <name type="primary">MRPS11</name>
</gene>
<sequence>MQVLRNSGSWLLRSWAWPPTTRVVAGVPAPTIHMSAQQMQDAAAKEEVEKAETPAPAPSRSSFSIYPPIPGQESSLRWAGKKFEEIPIAHIKASYNNTQIHVVSAAHQPLARASCGTEGFRNAKKGTGIAAQTAGIAAAAKATGKGVTHVRVVVKGLGPGRLSAIKGLTMGGLEVISITDNTPIPHNGCRPRKARRL</sequence>
<organism>
    <name type="scientific">Bos taurus</name>
    <name type="common">Bovine</name>
    <dbReference type="NCBI Taxonomy" id="9913"/>
    <lineage>
        <taxon>Eukaryota</taxon>
        <taxon>Metazoa</taxon>
        <taxon>Chordata</taxon>
        <taxon>Craniata</taxon>
        <taxon>Vertebrata</taxon>
        <taxon>Euteleostomi</taxon>
        <taxon>Mammalia</taxon>
        <taxon>Eutheria</taxon>
        <taxon>Laurasiatheria</taxon>
        <taxon>Artiodactyla</taxon>
        <taxon>Ruminantia</taxon>
        <taxon>Pecora</taxon>
        <taxon>Bovidae</taxon>
        <taxon>Bovinae</taxon>
        <taxon>Bos</taxon>
    </lineage>
</organism>
<keyword id="KW-0002">3D-structure</keyword>
<keyword id="KW-0903">Direct protein sequencing</keyword>
<keyword id="KW-0496">Mitochondrion</keyword>
<keyword id="KW-1185">Reference proteome</keyword>
<keyword id="KW-0687">Ribonucleoprotein</keyword>
<keyword id="KW-0689">Ribosomal protein</keyword>
<keyword id="KW-0809">Transit peptide</keyword>
<comment type="subunit">
    <text evidence="3 4">Component of the mitochondrial ribosome small subunit (28S) which comprises a 12S rRNA and about 30 distinct proteins.</text>
</comment>
<comment type="subcellular location">
    <subcellularLocation>
        <location evidence="3 4">Mitochondrion</location>
    </subcellularLocation>
</comment>
<comment type="similarity">
    <text evidence="5">Belongs to the universal ribosomal protein uS11 family.</text>
</comment>
<accession>P82911</accession>
<accession>Q3T0Q7</accession>
<proteinExistence type="evidence at protein level"/>